<protein>
    <recommendedName>
        <fullName evidence="1">Glutamyl-tRNA(Gln) amidotransferase subunit A</fullName>
        <shortName evidence="1">Glu-ADT subunit A</shortName>
        <ecNumber evidence="1">6.3.5.7</ecNumber>
    </recommendedName>
</protein>
<organism>
    <name type="scientific">Nitrobacter hamburgensis (strain DSM 10229 / NCIMB 13809 / X14)</name>
    <dbReference type="NCBI Taxonomy" id="323097"/>
    <lineage>
        <taxon>Bacteria</taxon>
        <taxon>Pseudomonadati</taxon>
        <taxon>Pseudomonadota</taxon>
        <taxon>Alphaproteobacteria</taxon>
        <taxon>Hyphomicrobiales</taxon>
        <taxon>Nitrobacteraceae</taxon>
        <taxon>Nitrobacter</taxon>
    </lineage>
</organism>
<gene>
    <name evidence="1" type="primary">gatA</name>
    <name type="ordered locus">Nham_2275</name>
</gene>
<proteinExistence type="inferred from homology"/>
<comment type="function">
    <text evidence="1">Allows the formation of correctly charged Gln-tRNA(Gln) through the transamidation of misacylated Glu-tRNA(Gln) in organisms which lack glutaminyl-tRNA synthetase. The reaction takes place in the presence of glutamine and ATP through an activated gamma-phospho-Glu-tRNA(Gln).</text>
</comment>
<comment type="catalytic activity">
    <reaction evidence="1">
        <text>L-glutamyl-tRNA(Gln) + L-glutamine + ATP + H2O = L-glutaminyl-tRNA(Gln) + L-glutamate + ADP + phosphate + H(+)</text>
        <dbReference type="Rhea" id="RHEA:17521"/>
        <dbReference type="Rhea" id="RHEA-COMP:9681"/>
        <dbReference type="Rhea" id="RHEA-COMP:9684"/>
        <dbReference type="ChEBI" id="CHEBI:15377"/>
        <dbReference type="ChEBI" id="CHEBI:15378"/>
        <dbReference type="ChEBI" id="CHEBI:29985"/>
        <dbReference type="ChEBI" id="CHEBI:30616"/>
        <dbReference type="ChEBI" id="CHEBI:43474"/>
        <dbReference type="ChEBI" id="CHEBI:58359"/>
        <dbReference type="ChEBI" id="CHEBI:78520"/>
        <dbReference type="ChEBI" id="CHEBI:78521"/>
        <dbReference type="ChEBI" id="CHEBI:456216"/>
        <dbReference type="EC" id="6.3.5.7"/>
    </reaction>
</comment>
<comment type="subunit">
    <text evidence="1">Heterotrimer of A, B and C subunits.</text>
</comment>
<comment type="similarity">
    <text evidence="1">Belongs to the amidase family. GatA subfamily.</text>
</comment>
<accession>Q1QL30</accession>
<feature type="chain" id="PRO_1000015873" description="Glutamyl-tRNA(Gln) amidotransferase subunit A">
    <location>
        <begin position="1"/>
        <end position="491"/>
    </location>
</feature>
<feature type="active site" description="Charge relay system" evidence="1">
    <location>
        <position position="78"/>
    </location>
</feature>
<feature type="active site" description="Charge relay system" evidence="1">
    <location>
        <position position="158"/>
    </location>
</feature>
<feature type="active site" description="Acyl-ester intermediate" evidence="1">
    <location>
        <position position="182"/>
    </location>
</feature>
<sequence>MTDLTSLTLAEARDGLANKSFTALELTDAHLEAIERARVLNAYVLETPAQARAMAREADVRIAKGEGGPLNGLPLGVKDLFATEGTRTTACSQILDDFKPPYESTVTSQLWRDGAVMLGKLNNDEFAMGSSNETSRFGPVVNPWRRQGSDAKLVPGGSSGGSASAVAAGLCLGATATDTGGSIRQPAAFTGTVGIKPTYGRCSRWGIVAFASSLDQAGPIARTVRDAAILMHSMAGHDPKDTTSVDRPVPDYEAAVGKSVKGMKIGIPKEYRLDGMPAEIEKLWTQGAGWLKSAGAELVEVSLPHTKYALPAYYIVAPAEASSNLARYDGVRYGARVEGRNIVEMYENTRAKGFGAEVRRRIMIGTYVLSAGYYDAYYLRAQKVRTLIKKDFEDCYAAGIDAILTPATPSAAFGIGEKAGADPIEMYLNDIFTVTANMAGLPGIAVPAGRDAQGLPLGLQLVGRPFDEETLLSLGEVIEQAAGRFTPERWW</sequence>
<evidence type="ECO:0000255" key="1">
    <source>
        <dbReference type="HAMAP-Rule" id="MF_00120"/>
    </source>
</evidence>
<name>GATA_NITHX</name>
<reference key="1">
    <citation type="submission" date="2006-03" db="EMBL/GenBank/DDBJ databases">
        <title>Complete sequence of chromosome of Nitrobacter hamburgensis X14.</title>
        <authorList>
            <consortium name="US DOE Joint Genome Institute"/>
            <person name="Copeland A."/>
            <person name="Lucas S."/>
            <person name="Lapidus A."/>
            <person name="Barry K."/>
            <person name="Detter J.C."/>
            <person name="Glavina del Rio T."/>
            <person name="Hammon N."/>
            <person name="Israni S."/>
            <person name="Dalin E."/>
            <person name="Tice H."/>
            <person name="Pitluck S."/>
            <person name="Chain P."/>
            <person name="Malfatti S."/>
            <person name="Shin M."/>
            <person name="Vergez L."/>
            <person name="Schmutz J."/>
            <person name="Larimer F."/>
            <person name="Land M."/>
            <person name="Hauser L."/>
            <person name="Kyrpides N."/>
            <person name="Ivanova N."/>
            <person name="Ward B."/>
            <person name="Arp D."/>
            <person name="Klotz M."/>
            <person name="Stein L."/>
            <person name="O'Mullan G."/>
            <person name="Starkenburg S."/>
            <person name="Sayavedra L."/>
            <person name="Poret-Peterson A.T."/>
            <person name="Gentry M.E."/>
            <person name="Bruce D."/>
            <person name="Richardson P."/>
        </authorList>
    </citation>
    <scope>NUCLEOTIDE SEQUENCE [LARGE SCALE GENOMIC DNA]</scope>
    <source>
        <strain>DSM 10229 / NCIMB 13809 / X14</strain>
    </source>
</reference>
<keyword id="KW-0067">ATP-binding</keyword>
<keyword id="KW-0436">Ligase</keyword>
<keyword id="KW-0547">Nucleotide-binding</keyword>
<keyword id="KW-0648">Protein biosynthesis</keyword>
<keyword id="KW-1185">Reference proteome</keyword>
<dbReference type="EC" id="6.3.5.7" evidence="1"/>
<dbReference type="EMBL" id="CP000319">
    <property type="protein sequence ID" value="ABE63067.1"/>
    <property type="molecule type" value="Genomic_DNA"/>
</dbReference>
<dbReference type="RefSeq" id="WP_011510744.1">
    <property type="nucleotide sequence ID" value="NC_007964.1"/>
</dbReference>
<dbReference type="SMR" id="Q1QL30"/>
<dbReference type="STRING" id="323097.Nham_2275"/>
<dbReference type="KEGG" id="nha:Nham_2275"/>
<dbReference type="eggNOG" id="COG0154">
    <property type="taxonomic scope" value="Bacteria"/>
</dbReference>
<dbReference type="HOGENOM" id="CLU_009600_0_3_5"/>
<dbReference type="OrthoDB" id="9811471at2"/>
<dbReference type="Proteomes" id="UP000001953">
    <property type="component" value="Chromosome"/>
</dbReference>
<dbReference type="GO" id="GO:0030956">
    <property type="term" value="C:glutamyl-tRNA(Gln) amidotransferase complex"/>
    <property type="evidence" value="ECO:0007669"/>
    <property type="project" value="InterPro"/>
</dbReference>
<dbReference type="GO" id="GO:0005524">
    <property type="term" value="F:ATP binding"/>
    <property type="evidence" value="ECO:0007669"/>
    <property type="project" value="UniProtKB-KW"/>
</dbReference>
<dbReference type="GO" id="GO:0050567">
    <property type="term" value="F:glutaminyl-tRNA synthase (glutamine-hydrolyzing) activity"/>
    <property type="evidence" value="ECO:0007669"/>
    <property type="project" value="UniProtKB-UniRule"/>
</dbReference>
<dbReference type="GO" id="GO:0006412">
    <property type="term" value="P:translation"/>
    <property type="evidence" value="ECO:0007669"/>
    <property type="project" value="UniProtKB-UniRule"/>
</dbReference>
<dbReference type="Gene3D" id="3.90.1300.10">
    <property type="entry name" value="Amidase signature (AS) domain"/>
    <property type="match status" value="1"/>
</dbReference>
<dbReference type="HAMAP" id="MF_00120">
    <property type="entry name" value="GatA"/>
    <property type="match status" value="1"/>
</dbReference>
<dbReference type="InterPro" id="IPR000120">
    <property type="entry name" value="Amidase"/>
</dbReference>
<dbReference type="InterPro" id="IPR020556">
    <property type="entry name" value="Amidase_CS"/>
</dbReference>
<dbReference type="InterPro" id="IPR023631">
    <property type="entry name" value="Amidase_dom"/>
</dbReference>
<dbReference type="InterPro" id="IPR036928">
    <property type="entry name" value="AS_sf"/>
</dbReference>
<dbReference type="InterPro" id="IPR004412">
    <property type="entry name" value="GatA"/>
</dbReference>
<dbReference type="NCBIfam" id="TIGR00132">
    <property type="entry name" value="gatA"/>
    <property type="match status" value="1"/>
</dbReference>
<dbReference type="PANTHER" id="PTHR11895:SF151">
    <property type="entry name" value="GLUTAMYL-TRNA(GLN) AMIDOTRANSFERASE SUBUNIT A"/>
    <property type="match status" value="1"/>
</dbReference>
<dbReference type="PANTHER" id="PTHR11895">
    <property type="entry name" value="TRANSAMIDASE"/>
    <property type="match status" value="1"/>
</dbReference>
<dbReference type="Pfam" id="PF01425">
    <property type="entry name" value="Amidase"/>
    <property type="match status" value="1"/>
</dbReference>
<dbReference type="SUPFAM" id="SSF75304">
    <property type="entry name" value="Amidase signature (AS) enzymes"/>
    <property type="match status" value="1"/>
</dbReference>
<dbReference type="PROSITE" id="PS00571">
    <property type="entry name" value="AMIDASES"/>
    <property type="match status" value="1"/>
</dbReference>